<gene>
    <name evidence="8" type="primary">pkdA</name>
    <name type="ORF">ANIA_00523</name>
</gene>
<comment type="function">
    <text evidence="7">Non-reducing polyketide synthase that synthesizes 6-ethyl-2,4-dihydroxy-3,5-dimethylbenzaldehyde via condensation of one propanoyl-CoA starter unit with 3 malonyl-CoA units, as well as 2 methylation steps.</text>
</comment>
<comment type="catalytic activity">
    <reaction evidence="7">
        <text>propanoyl-CoA + 3 malonyl-CoA + AH2 + 2 S-adenosyl-L-methionine + H(+) = 2-ethyl-4,6-dihydroxy-3,5-dimethylbenzaldehyde + A + 2 S-adenosyl-L-homocysteine + 3 CO2 + 4 CoA + H2O</text>
        <dbReference type="Rhea" id="RHEA:64504"/>
        <dbReference type="ChEBI" id="CHEBI:13193"/>
        <dbReference type="ChEBI" id="CHEBI:15377"/>
        <dbReference type="ChEBI" id="CHEBI:15378"/>
        <dbReference type="ChEBI" id="CHEBI:16526"/>
        <dbReference type="ChEBI" id="CHEBI:17499"/>
        <dbReference type="ChEBI" id="CHEBI:57287"/>
        <dbReference type="ChEBI" id="CHEBI:57384"/>
        <dbReference type="ChEBI" id="CHEBI:57392"/>
        <dbReference type="ChEBI" id="CHEBI:57856"/>
        <dbReference type="ChEBI" id="CHEBI:59789"/>
        <dbReference type="ChEBI" id="CHEBI:133958"/>
    </reaction>
    <physiologicalReaction direction="left-to-right" evidence="7">
        <dbReference type="Rhea" id="RHEA:64505"/>
    </physiologicalReaction>
</comment>
<comment type="cofactor">
    <cofactor evidence="1">
        <name>pantetheine 4'-phosphate</name>
        <dbReference type="ChEBI" id="CHEBI:47942"/>
    </cofactor>
    <text evidence="2">Binds 1 phosphopantetheine covalently.</text>
</comment>
<comment type="pathway">
    <text evidence="7">Secondary metabolite biosynthesis.</text>
</comment>
<comment type="domain">
    <text evidence="9">Multidomain protein; including an N-terminal starter unit:ACP transacylase (SAT) domain, a beta-ketoacyl synthase (KS) domain, a malonyl-CoA:ACP transacylase (MAT) domain, a product template (PT) domain that controls the immediate cyclization regioselectivity of the reactive polyketide backbone, an acyl carrier protein (ACP) domain, a methyltransferase (CMeT) domain responsible for the incorporation of methyl groups, and a reductive NADPH-binding domain that is required for NADPH-dependent product release.</text>
</comment>
<evidence type="ECO:0000250" key="1">
    <source>
        <dbReference type="UniProtKB" id="A0A0K0MCJ4"/>
    </source>
</evidence>
<evidence type="ECO:0000255" key="2"/>
<evidence type="ECO:0000255" key="3">
    <source>
        <dbReference type="PROSITE-ProRule" id="PRU00258"/>
    </source>
</evidence>
<evidence type="ECO:0000255" key="4">
    <source>
        <dbReference type="PROSITE-ProRule" id="PRU01348"/>
    </source>
</evidence>
<evidence type="ECO:0000255" key="5">
    <source>
        <dbReference type="PROSITE-ProRule" id="PRU01363"/>
    </source>
</evidence>
<evidence type="ECO:0000256" key="6">
    <source>
        <dbReference type="SAM" id="MobiDB-lite"/>
    </source>
</evidence>
<evidence type="ECO:0000269" key="7">
    <source>
    </source>
</evidence>
<evidence type="ECO:0000303" key="8">
    <source>
    </source>
</evidence>
<evidence type="ECO:0000305" key="9">
    <source>
    </source>
</evidence>
<protein>
    <recommendedName>
        <fullName evidence="8">Non-reducing polyketide synthase pkdA</fullName>
        <shortName evidence="8">NR-PKS pkdA</shortName>
        <ecNumber evidence="7">2.3.1.-</ecNumber>
    </recommendedName>
    <alternativeName>
        <fullName evidence="8">Pkd biosynthesis cluster protein A</fullName>
    </alternativeName>
</protein>
<sequence>MASSSSSTQAENLILIFGPQDPNLNDAYLQSLRTNLLDSPFLQWIVHTLIQLPQEWQRIAPTHTELGSFQGQKYLQLLSEWMRKGTLPGNIFPLPNILVTPLVVTTHLAQYTKLLEQLNPAIATNDMLSGIVKHDIQTVGLCTGLLSSAAVASSATLAELEKHGAAAIRMAMAIGALVDAGDTEVEDGDKWQSLAVGWTTQNGDAELEGISKQFSHAYVSVISEARLATLTMLKNDANAIQRELTNAGFIYTKTALRGPFHCGSREDQAVSLMRLFDSDPSFQFPGASTLVFRTRAPDGEEFPLDRSLHGAAARAMLTDQADWHKLYTKLHESTNSHPGIVITFGSQRFIPQWFLRKLGPRLAHVLDLDVGSGHWPAPLYTLQDSGQDESIAVVGMACNFPGGSDLDEFWDTVCAAKSQCTEVPPERVDFDYEAWRENDTQRKWFGNFIREYDTFDHKFFQKSPREMISTDPQHRIMLQVAYQAVQQSGYFNRPGRSKHVGCYVGIGVTDYENNVACHPPTAYTATGNLKSFAAGKISHFFGWSGPGVTVDTACSSSALAIHLACKAILSGECDASLAGGVNVITSPEWYQNLDGASFLSPTGQCKPFDAAADGYCRGEGAGAVFLKRLSSAVEDGDQIVGVIRATSVNQNENCSAITAPSVRSLANVFNGVIRKARVDPKQISVVEAHGTGTQVGDRAEYDSIRTVLGGPGRAYPLSLGSVKGLIGHLECASGIAALIKVLLMVQNGIIPPQPGFSKINPKLEALPSDNIEIPTSLRPWNPGFRAALLNNYGASGSNASLVVTQAGVPHLNQSAIPKGASAGRRPFWLSGTDVQSLRSYAAKLVQMLRSRKADDPRFTVANLSFQLARQSNRNLGQALIFSCASVDELEAKLADFASGGNTLTSVPRPDSSRPVILCFGGQRSSFVGLDREAFDSFKLLKSHLTHCHETSLALGLGGILPAIFDRTPRSSIVELQLMQFALQYSCAKTWIDSGIHVAALVGHSFGELTAMCVSGTLSLQDTLRMIAGRARIIEEKWGPDRGSMMAVDGELELVQRLLHNAHEASPNEPAVNIACFNGPRLFTLAGTTKAMRVVREVLSKDNRLSSIKVKSLETSHAFHSTLVEPLIPDLEELGEESIFRKPVVVHERATQNSVAGPPPFSIFASHMRDPVYFDRAVQRLANRYPSSIWLEAGSGSGVTNLASRAAGSRAMAFQSINITSSSAVQNVADATLNLWKEGLQVMFWEHVRPSPKFPLLLLPPYQFAKSRHWLERRKLKTKVFVPASPVQEAQKGLWTFVGYQDSDRCQARFQIHITSDEFQNYVSAHVIAQTAPICPSMFQQVIARDALATLVDGDMIPELEGMENDTPLCLDGSKSVWLVAERPSDRSSAWDFRITSSDSGNTTQHVSGRITFQTPKQSMQAFAAYERLVDHRRALALLNGQEAEQTIQGSRNIYKLFSNVVNYKEDGYRGLQKLAATSNESAGRIIKQDSSKSILGVGLGDTFCQVAGIFLNCMTDCDEGKMYLSNRVERWIRSPTVPLDLRPEQWEVYARHHQPSPKEYVSDIFVFDATNGKLVWVILGLHFVEVSIAGMSRFLTRLSGGQLEPQEKCLATVEFKEVPEPVFTKDVSKNEKDAKAPSKKKESTSKSPGHDILARVRTLFCNLLGLEPVEIQPGADLVELGIDSLLAMEVAREVEKEFSIKFELDELMDMTDVHSLVKCIGANMMASDTSRTGDDSSDDLETASAESETSSGINNEDSHNIDRQQIPASSIVDSFTETKLLTDRFIEANKLSGYSNNVQPRLTELVIVHTLDAFDQMGCSIRAAQPGQTVRRISHLPKHNQVVAVLYGLLEKASLVDVDGPRMTRTAVPVPSKSAEQILQELLRQYPEHAYDHKLTSLTGCKLADCLTGKTEAIQLLFGTPEGRDLAAGMYGKSPINVAWLRQLQHFWEHFLAQLPQHRTEPINILEMGAGTGGTTAALVPLLSRSRIPVRYTATDISPSLVAGLRKRFKDHTWMRFEVVDCEKTPSSHLFESQHVVLAVAIIPPAPSKMSTADIASRQAIIDTLVEKHTSHFSAPTCLPPNQVIDGSPHCVLVTGATGSLGSHLVAHLVKQSSVTKVVCLNRVSGSDATSRQLDAFQSKGLILDSESLSKLEVIETDSSAPSLGLVPERYQHLVNTVTDVVHNAWAMSMTRPVRGFEPQFKTMRNLIDLCRDCANRRHSDTGKVGFQFVSSVSVVGCHPFITKKAIVPEQPVNAESALPMGYADAKLVCEHILDETLHMHPDIFRTMSVRVGQISGSKINGYWNPVEHLVHLIKSSKTLNVLPDLEGVLSWCPVDDVAAALGDLLLTNKPAYSVYHIENPVRQPWPDMLTILADALDIPRTNAVPFKEWLRRVRHFPPSLGFSENPAARLADFFETDFLRMSCGGMILDTTRSREHSATLRSLGPIDQDLVMKITFKRIYAIFAKSSEVKIKKSS</sequence>
<feature type="chain" id="PRO_0000450875" description="Non-reducing polyketide synthase pkdA">
    <location>
        <begin position="1"/>
        <end position="2476"/>
    </location>
</feature>
<feature type="domain" description="Ketosynthase family 3 (KS3)" evidence="4 9">
    <location>
        <begin position="388"/>
        <end position="805"/>
    </location>
</feature>
<feature type="domain" description="PKS/mFAS DH" evidence="5">
    <location>
        <begin position="1290"/>
        <end position="1592"/>
    </location>
</feature>
<feature type="domain" description="Carrier" evidence="3 9">
    <location>
        <begin position="1650"/>
        <end position="1724"/>
    </location>
</feature>
<feature type="region of interest" description="N-terminal acylcarrier protein transacylase domain (SAT)" evidence="2 9">
    <location>
        <begin position="22"/>
        <end position="230"/>
    </location>
</feature>
<feature type="region of interest" description="Malonyl-CoA:ACP transacylase (MAT)" evidence="2 9">
    <location>
        <begin position="919"/>
        <end position="1204"/>
    </location>
</feature>
<feature type="region of interest" description="N-terminal hotdog fold" evidence="5">
    <location>
        <begin position="1290"/>
        <end position="1417"/>
    </location>
</feature>
<feature type="region of interest" description="Product template (PT) domain" evidence="9">
    <location>
        <begin position="1321"/>
        <end position="1590"/>
    </location>
</feature>
<feature type="region of interest" description="C-terminal hotdog fold" evidence="5">
    <location>
        <begin position="1445"/>
        <end position="1592"/>
    </location>
</feature>
<feature type="region of interest" description="Disordered" evidence="6">
    <location>
        <begin position="1626"/>
        <end position="1649"/>
    </location>
</feature>
<feature type="region of interest" description="Disordered" evidence="6">
    <location>
        <begin position="1727"/>
        <end position="1766"/>
    </location>
</feature>
<feature type="region of interest" description="Methyltransferase (CMeT) domain" evidence="2 9">
    <location>
        <begin position="1881"/>
        <end position="2030"/>
    </location>
</feature>
<feature type="region of interest" description="NADPH-binding domain" evidence="2 9">
    <location>
        <begin position="2094"/>
        <end position="2340"/>
    </location>
</feature>
<feature type="compositionally biased region" description="Low complexity" evidence="6">
    <location>
        <begin position="1742"/>
        <end position="1751"/>
    </location>
</feature>
<feature type="active site" description="Nucleophile; for transacylase activity" evidence="1">
    <location>
        <position position="142"/>
    </location>
</feature>
<feature type="active site" description="Proton donor/acceptor; for transacylase activity" evidence="1">
    <location>
        <position position="261"/>
    </location>
</feature>
<feature type="active site" description="For beta-ketoacyl synthase activity" evidence="4">
    <location>
        <position position="554"/>
    </location>
</feature>
<feature type="active site" description="For beta-ketoacyl synthase activity" evidence="4">
    <location>
        <position position="689"/>
    </location>
</feature>
<feature type="active site" description="For beta-ketoacyl synthase activity" evidence="4">
    <location>
        <position position="728"/>
    </location>
</feature>
<feature type="active site" description="Proton acceptor; for dehydratase activity" evidence="5">
    <location>
        <position position="1325"/>
    </location>
</feature>
<feature type="active site" description="Proton donor; for dehydratase activity" evidence="5">
    <location>
        <position position="1501"/>
    </location>
</feature>
<feature type="modified residue" description="O-(pantetheine 4'-phosphoryl)serine" evidence="3">
    <location>
        <position position="1684"/>
    </location>
</feature>
<reference key="1">
    <citation type="journal article" date="2005" name="Nature">
        <title>Sequencing of Aspergillus nidulans and comparative analysis with A. fumigatus and A. oryzae.</title>
        <authorList>
            <person name="Galagan J.E."/>
            <person name="Calvo S.E."/>
            <person name="Cuomo C."/>
            <person name="Ma L.-J."/>
            <person name="Wortman J.R."/>
            <person name="Batzoglou S."/>
            <person name="Lee S.-I."/>
            <person name="Bastuerkmen M."/>
            <person name="Spevak C.C."/>
            <person name="Clutterbuck J."/>
            <person name="Kapitonov V."/>
            <person name="Jurka J."/>
            <person name="Scazzocchio C."/>
            <person name="Farman M.L."/>
            <person name="Butler J."/>
            <person name="Purcell S."/>
            <person name="Harris S."/>
            <person name="Braus G.H."/>
            <person name="Draht O."/>
            <person name="Busch S."/>
            <person name="D'Enfert C."/>
            <person name="Bouchier C."/>
            <person name="Goldman G.H."/>
            <person name="Bell-Pedersen D."/>
            <person name="Griffiths-Jones S."/>
            <person name="Doonan J.H."/>
            <person name="Yu J."/>
            <person name="Vienken K."/>
            <person name="Pain A."/>
            <person name="Freitag M."/>
            <person name="Selker E.U."/>
            <person name="Archer D.B."/>
            <person name="Penalva M.A."/>
            <person name="Oakley B.R."/>
            <person name="Momany M."/>
            <person name="Tanaka T."/>
            <person name="Kumagai T."/>
            <person name="Asai K."/>
            <person name="Machida M."/>
            <person name="Nierman W.C."/>
            <person name="Denning D.W."/>
            <person name="Caddick M.X."/>
            <person name="Hynes M."/>
            <person name="Paoletti M."/>
            <person name="Fischer R."/>
            <person name="Miller B.L."/>
            <person name="Dyer P.S."/>
            <person name="Sachs M.S."/>
            <person name="Osmani S.A."/>
            <person name="Birren B.W."/>
        </authorList>
    </citation>
    <scope>NUCLEOTIDE SEQUENCE [LARGE SCALE GENOMIC DNA]</scope>
    <source>
        <strain>FGSC A4 / ATCC 38163 / CBS 112.46 / NRRL 194 / M139</strain>
    </source>
</reference>
<reference key="2">
    <citation type="journal article" date="2009" name="Fungal Genet. Biol.">
        <title>The 2008 update of the Aspergillus nidulans genome annotation: a community effort.</title>
        <authorList>
            <person name="Wortman J.R."/>
            <person name="Gilsenan J.M."/>
            <person name="Joardar V."/>
            <person name="Deegan J."/>
            <person name="Clutterbuck J."/>
            <person name="Andersen M.R."/>
            <person name="Archer D."/>
            <person name="Bencina M."/>
            <person name="Braus G."/>
            <person name="Coutinho P."/>
            <person name="von Dohren H."/>
            <person name="Doonan J."/>
            <person name="Driessen A.J."/>
            <person name="Durek P."/>
            <person name="Espeso E."/>
            <person name="Fekete E."/>
            <person name="Flipphi M."/>
            <person name="Estrada C.G."/>
            <person name="Geysens S."/>
            <person name="Goldman G."/>
            <person name="de Groot P.W."/>
            <person name="Hansen K."/>
            <person name="Harris S.D."/>
            <person name="Heinekamp T."/>
            <person name="Helmstaedt K."/>
            <person name="Henrissat B."/>
            <person name="Hofmann G."/>
            <person name="Homan T."/>
            <person name="Horio T."/>
            <person name="Horiuchi H."/>
            <person name="James S."/>
            <person name="Jones M."/>
            <person name="Karaffa L."/>
            <person name="Karanyi Z."/>
            <person name="Kato M."/>
            <person name="Keller N."/>
            <person name="Kelly D.E."/>
            <person name="Kiel J.A."/>
            <person name="Kim J.M."/>
            <person name="van der Klei I.J."/>
            <person name="Klis F.M."/>
            <person name="Kovalchuk A."/>
            <person name="Krasevec N."/>
            <person name="Kubicek C.P."/>
            <person name="Liu B."/>
            <person name="Maccabe A."/>
            <person name="Meyer V."/>
            <person name="Mirabito P."/>
            <person name="Miskei M."/>
            <person name="Mos M."/>
            <person name="Mullins J."/>
            <person name="Nelson D.R."/>
            <person name="Nielsen J."/>
            <person name="Oakley B.R."/>
            <person name="Osmani S.A."/>
            <person name="Pakula T."/>
            <person name="Paszewski A."/>
            <person name="Paulsen I."/>
            <person name="Pilsyk S."/>
            <person name="Pocsi I."/>
            <person name="Punt P.J."/>
            <person name="Ram A.F."/>
            <person name="Ren Q."/>
            <person name="Robellet X."/>
            <person name="Robson G."/>
            <person name="Seiboth B."/>
            <person name="van Solingen P."/>
            <person name="Specht T."/>
            <person name="Sun J."/>
            <person name="Taheri-Talesh N."/>
            <person name="Takeshita N."/>
            <person name="Ussery D."/>
            <person name="vanKuyk P.A."/>
            <person name="Visser H."/>
            <person name="van de Vondervoort P.J."/>
            <person name="de Vries R.P."/>
            <person name="Walton J."/>
            <person name="Xiang X."/>
            <person name="Xiong Y."/>
            <person name="Zeng A.P."/>
            <person name="Brandt B.W."/>
            <person name="Cornell M.J."/>
            <person name="van den Hondel C.A."/>
            <person name="Visser J."/>
            <person name="Oliver S.G."/>
            <person name="Turner G."/>
        </authorList>
    </citation>
    <scope>GENOME REANNOTATION</scope>
    <source>
        <strain>FGSC A4 / ATCC 38163 / CBS 112.46 / NRRL 194 / M139</strain>
    </source>
</reference>
<reference key="3">
    <citation type="journal article" date="2012" name="J. Am. Chem. Soc.">
        <title>Illuminating the diversity of aromatic polyketide synthases in Aspergillus nidulans.</title>
        <authorList>
            <person name="Ahuja M."/>
            <person name="Chiang Y.M."/>
            <person name="Chang S.L."/>
            <person name="Praseuth M.B."/>
            <person name="Entwistle R."/>
            <person name="Sanchez J.F."/>
            <person name="Lo H.C."/>
            <person name="Yeh H.H."/>
            <person name="Oakley B.R."/>
            <person name="Wang C.C."/>
        </authorList>
    </citation>
    <scope>DOMAIN</scope>
    <scope>FUNCTION</scope>
    <scope>CATALYTIC ACTIVITY</scope>
    <scope>PATHWAY</scope>
</reference>
<name>PKDA_EMENI</name>
<dbReference type="EC" id="2.3.1.-" evidence="7"/>
<dbReference type="EMBL" id="BN001308">
    <property type="protein sequence ID" value="CBF89312.1"/>
    <property type="molecule type" value="Genomic_DNA"/>
</dbReference>
<dbReference type="RefSeq" id="XP_658127.1">
    <property type="nucleotide sequence ID" value="XM_653035.1"/>
</dbReference>
<dbReference type="SMR" id="Q5BG07"/>
<dbReference type="STRING" id="227321.Q5BG07"/>
<dbReference type="EnsemblFungi" id="CBF89312">
    <property type="protein sequence ID" value="CBF89312"/>
    <property type="gene ID" value="ANIA_00523"/>
</dbReference>
<dbReference type="GeneID" id="2876299"/>
<dbReference type="KEGG" id="ani:ANIA_00523"/>
<dbReference type="VEuPathDB" id="FungiDB:AN0523"/>
<dbReference type="eggNOG" id="KOG1178">
    <property type="taxonomic scope" value="Eukaryota"/>
</dbReference>
<dbReference type="eggNOG" id="KOG1202">
    <property type="taxonomic scope" value="Eukaryota"/>
</dbReference>
<dbReference type="HOGENOM" id="CLU_000022_6_2_1"/>
<dbReference type="InParanoid" id="Q5BG07"/>
<dbReference type="OMA" id="LATNCVH"/>
<dbReference type="OrthoDB" id="329835at2759"/>
<dbReference type="Proteomes" id="UP000000560">
    <property type="component" value="Chromosome VIII"/>
</dbReference>
<dbReference type="GO" id="GO:0004312">
    <property type="term" value="F:fatty acid synthase activity"/>
    <property type="evidence" value="ECO:0000318"/>
    <property type="project" value="GO_Central"/>
</dbReference>
<dbReference type="GO" id="GO:0008168">
    <property type="term" value="F:methyltransferase activity"/>
    <property type="evidence" value="ECO:0007669"/>
    <property type="project" value="UniProtKB-KW"/>
</dbReference>
<dbReference type="GO" id="GO:0031177">
    <property type="term" value="F:phosphopantetheine binding"/>
    <property type="evidence" value="ECO:0007669"/>
    <property type="project" value="InterPro"/>
</dbReference>
<dbReference type="GO" id="GO:0006633">
    <property type="term" value="P:fatty acid biosynthetic process"/>
    <property type="evidence" value="ECO:0000318"/>
    <property type="project" value="GO_Central"/>
</dbReference>
<dbReference type="GO" id="GO:0032259">
    <property type="term" value="P:methylation"/>
    <property type="evidence" value="ECO:0007669"/>
    <property type="project" value="UniProtKB-KW"/>
</dbReference>
<dbReference type="GO" id="GO:0019748">
    <property type="term" value="P:secondary metabolic process"/>
    <property type="evidence" value="ECO:0000303"/>
    <property type="project" value="AspGD"/>
</dbReference>
<dbReference type="GO" id="GO:0044550">
    <property type="term" value="P:secondary metabolite biosynthetic process"/>
    <property type="evidence" value="ECO:0000315"/>
    <property type="project" value="AspGD"/>
</dbReference>
<dbReference type="CDD" id="cd00833">
    <property type="entry name" value="PKS"/>
    <property type="match status" value="1"/>
</dbReference>
<dbReference type="Gene3D" id="3.30.70.3290">
    <property type="match status" value="1"/>
</dbReference>
<dbReference type="Gene3D" id="3.40.47.10">
    <property type="match status" value="1"/>
</dbReference>
<dbReference type="Gene3D" id="1.10.1200.10">
    <property type="entry name" value="ACP-like"/>
    <property type="match status" value="1"/>
</dbReference>
<dbReference type="Gene3D" id="3.40.366.10">
    <property type="entry name" value="Malonyl-Coenzyme A Acyl Carrier Protein, domain 2"/>
    <property type="match status" value="2"/>
</dbReference>
<dbReference type="Gene3D" id="3.40.50.720">
    <property type="entry name" value="NAD(P)-binding Rossmann-like Domain"/>
    <property type="match status" value="1"/>
</dbReference>
<dbReference type="Gene3D" id="3.10.129.110">
    <property type="entry name" value="Polyketide synthase dehydratase"/>
    <property type="match status" value="1"/>
</dbReference>
<dbReference type="Gene3D" id="3.40.50.150">
    <property type="entry name" value="Vaccinia Virus protein VP39"/>
    <property type="match status" value="1"/>
</dbReference>
<dbReference type="InterPro" id="IPR001227">
    <property type="entry name" value="Ac_transferase_dom_sf"/>
</dbReference>
<dbReference type="InterPro" id="IPR036736">
    <property type="entry name" value="ACP-like_sf"/>
</dbReference>
<dbReference type="InterPro" id="IPR014043">
    <property type="entry name" value="Acyl_transferase_dom"/>
</dbReference>
<dbReference type="InterPro" id="IPR016035">
    <property type="entry name" value="Acyl_Trfase/lysoPLipase"/>
</dbReference>
<dbReference type="InterPro" id="IPR013120">
    <property type="entry name" value="Far_NAD-bd"/>
</dbReference>
<dbReference type="InterPro" id="IPR014031">
    <property type="entry name" value="Ketoacyl_synth_C"/>
</dbReference>
<dbReference type="InterPro" id="IPR014030">
    <property type="entry name" value="Ketoacyl_synth_N"/>
</dbReference>
<dbReference type="InterPro" id="IPR016036">
    <property type="entry name" value="Malonyl_transacylase_ACP-bd"/>
</dbReference>
<dbReference type="InterPro" id="IPR036291">
    <property type="entry name" value="NAD(P)-bd_dom_sf"/>
</dbReference>
<dbReference type="InterPro" id="IPR020841">
    <property type="entry name" value="PKS_Beta-ketoAc_synthase_dom"/>
</dbReference>
<dbReference type="InterPro" id="IPR042104">
    <property type="entry name" value="PKS_dehydratase_sf"/>
</dbReference>
<dbReference type="InterPro" id="IPR049900">
    <property type="entry name" value="PKS_mFAS_DH"/>
</dbReference>
<dbReference type="InterPro" id="IPR050091">
    <property type="entry name" value="PKS_NRPS_Biosynth_Enz"/>
</dbReference>
<dbReference type="InterPro" id="IPR020806">
    <property type="entry name" value="PKS_PP-bd"/>
</dbReference>
<dbReference type="InterPro" id="IPR009081">
    <property type="entry name" value="PP-bd_ACP"/>
</dbReference>
<dbReference type="InterPro" id="IPR006162">
    <property type="entry name" value="Ppantetheine_attach_site"/>
</dbReference>
<dbReference type="InterPro" id="IPR029063">
    <property type="entry name" value="SAM-dependent_MTases_sf"/>
</dbReference>
<dbReference type="InterPro" id="IPR032088">
    <property type="entry name" value="SAT"/>
</dbReference>
<dbReference type="InterPro" id="IPR016039">
    <property type="entry name" value="Thiolase-like"/>
</dbReference>
<dbReference type="PANTHER" id="PTHR43775">
    <property type="entry name" value="FATTY ACID SYNTHASE"/>
    <property type="match status" value="1"/>
</dbReference>
<dbReference type="PANTHER" id="PTHR43775:SF14">
    <property type="entry name" value="ITERATIVE POLYKETIDE SYNTHASE AFOE-RELATED"/>
    <property type="match status" value="1"/>
</dbReference>
<dbReference type="Pfam" id="PF00698">
    <property type="entry name" value="Acyl_transf_1"/>
    <property type="match status" value="1"/>
</dbReference>
<dbReference type="Pfam" id="PF18558">
    <property type="entry name" value="HTH_51"/>
    <property type="match status" value="1"/>
</dbReference>
<dbReference type="Pfam" id="PF00109">
    <property type="entry name" value="ketoacyl-synt"/>
    <property type="match status" value="1"/>
</dbReference>
<dbReference type="Pfam" id="PF02801">
    <property type="entry name" value="Ketoacyl-synt_C"/>
    <property type="match status" value="1"/>
</dbReference>
<dbReference type="Pfam" id="PF07993">
    <property type="entry name" value="NAD_binding_4"/>
    <property type="match status" value="1"/>
</dbReference>
<dbReference type="Pfam" id="PF00550">
    <property type="entry name" value="PP-binding"/>
    <property type="match status" value="1"/>
</dbReference>
<dbReference type="Pfam" id="PF16073">
    <property type="entry name" value="SAT"/>
    <property type="match status" value="1"/>
</dbReference>
<dbReference type="SMART" id="SM00827">
    <property type="entry name" value="PKS_AT"/>
    <property type="match status" value="1"/>
</dbReference>
<dbReference type="SMART" id="SM00825">
    <property type="entry name" value="PKS_KS"/>
    <property type="match status" value="1"/>
</dbReference>
<dbReference type="SMART" id="SM00823">
    <property type="entry name" value="PKS_PP"/>
    <property type="match status" value="1"/>
</dbReference>
<dbReference type="SUPFAM" id="SSF47336">
    <property type="entry name" value="ACP-like"/>
    <property type="match status" value="1"/>
</dbReference>
<dbReference type="SUPFAM" id="SSF52151">
    <property type="entry name" value="FabD/lysophospholipase-like"/>
    <property type="match status" value="1"/>
</dbReference>
<dbReference type="SUPFAM" id="SSF51735">
    <property type="entry name" value="NAD(P)-binding Rossmann-fold domains"/>
    <property type="match status" value="1"/>
</dbReference>
<dbReference type="SUPFAM" id="SSF55048">
    <property type="entry name" value="Probable ACP-binding domain of malonyl-CoA ACP transacylase"/>
    <property type="match status" value="1"/>
</dbReference>
<dbReference type="SUPFAM" id="SSF53335">
    <property type="entry name" value="S-adenosyl-L-methionine-dependent methyltransferases"/>
    <property type="match status" value="1"/>
</dbReference>
<dbReference type="SUPFAM" id="SSF53901">
    <property type="entry name" value="Thiolase-like"/>
    <property type="match status" value="1"/>
</dbReference>
<dbReference type="PROSITE" id="PS50075">
    <property type="entry name" value="CARRIER"/>
    <property type="match status" value="1"/>
</dbReference>
<dbReference type="PROSITE" id="PS52004">
    <property type="entry name" value="KS3_2"/>
    <property type="match status" value="1"/>
</dbReference>
<dbReference type="PROSITE" id="PS00012">
    <property type="entry name" value="PHOSPHOPANTETHEINE"/>
    <property type="match status" value="1"/>
</dbReference>
<dbReference type="PROSITE" id="PS52019">
    <property type="entry name" value="PKS_MFAS_DH"/>
    <property type="match status" value="1"/>
</dbReference>
<proteinExistence type="evidence at protein level"/>
<accession>Q5BG07</accession>
<accession>C8VSV1</accession>
<organism>
    <name type="scientific">Emericella nidulans (strain FGSC A4 / ATCC 38163 / CBS 112.46 / NRRL 194 / M139)</name>
    <name type="common">Aspergillus nidulans</name>
    <dbReference type="NCBI Taxonomy" id="227321"/>
    <lineage>
        <taxon>Eukaryota</taxon>
        <taxon>Fungi</taxon>
        <taxon>Dikarya</taxon>
        <taxon>Ascomycota</taxon>
        <taxon>Pezizomycotina</taxon>
        <taxon>Eurotiomycetes</taxon>
        <taxon>Eurotiomycetidae</taxon>
        <taxon>Eurotiales</taxon>
        <taxon>Aspergillaceae</taxon>
        <taxon>Aspergillus</taxon>
        <taxon>Aspergillus subgen. Nidulantes</taxon>
    </lineage>
</organism>
<keyword id="KW-0012">Acyltransferase</keyword>
<keyword id="KW-0489">Methyltransferase</keyword>
<keyword id="KW-0511">Multifunctional enzyme</keyword>
<keyword id="KW-0521">NADP</keyword>
<keyword id="KW-0596">Phosphopantetheine</keyword>
<keyword id="KW-0597">Phosphoprotein</keyword>
<keyword id="KW-1185">Reference proteome</keyword>
<keyword id="KW-0949">S-adenosyl-L-methionine</keyword>
<keyword id="KW-0808">Transferase</keyword>